<sequence length="855" mass="97810">MAEGFAANRQWIGPEEAEELLDFDIATQMNEEGPLNPGINPFRVPGITETEKQDYCNMLQPKLQALRNEIQEVKLEEGNAGKFRRARFLRYSDETILSLIHLFIGYCTYLLNRKELGSLRHDIDIEAPQEECYSSREQSITDNIKYGKRCFIGTAGLYLLLFIGVGIYLGTAKAQVVWRLPPLVVPVEESEIIFWDCWAPEEPACQDFLGAMIHLKASTNISIQEGPTLGNWAKEIWGTLFKKATRQCRRGRIWKRWNETITGPLGCANNTCYNISVIVPDYQCYLDRVDTWLQGKVNVSLCLTGGKILYNKYTKQLSYCTDPLQIPLISYTFGPNQTCMWDTSQIQDPEIPKCGWWNQIAYYNSCRWESTDVKFHCQRTQSQPGLWLRAISSWKQRNRWEWRPDFESEKAKVSLQCNSTKNLTFAMRSSGDYGEVTGAWIEFGCHRNKSKLHTEARFRIRCRWNVGDNTSLIDTCGETQNVSGANPVDCTMYANRMYNCSLQNGFTMKVDDLIMHFNMTKAVEMYDIAGNWSCTSDLPPTWGYMNCNCTNSSSTNSVKMACPKNQGILRNWYNPVAGLRQSLEKYQVVKQPDYLVVPGEVMEYKPRRKRAAIHVMLALATVLSMAGAGTGATAIGMVTQYHQVLATHQETIEKVTEALKINNLRLVTLEHQVLVIGLKVEAMEKFLYTAFAMQELGCNQNQFFCKVPPELWKRYNMTINQTIWNHGNITLGEWYNQTKELQQKFYEIIMNIEQNNVQVKKGLQQLQEWEDWVGWIGNIPQYLKGLLGGILGIGIGVLLLILCLPTLVDCIRNCISKVLGYTVIAMPEIGDEEETVQMELRKNGRQCGMSEKEEE</sequence>
<keyword id="KW-0165">Cleavage on pair of basic residues</keyword>
<keyword id="KW-0175">Coiled coil</keyword>
<keyword id="KW-1015">Disulfide bond</keyword>
<keyword id="KW-0325">Glycoprotein</keyword>
<keyword id="KW-1032">Host cell membrane</keyword>
<keyword id="KW-1043">Host membrane</keyword>
<keyword id="KW-0945">Host-virus interaction</keyword>
<keyword id="KW-0472">Membrane</keyword>
<keyword id="KW-0812">Transmembrane</keyword>
<keyword id="KW-1133">Transmembrane helix</keyword>
<keyword id="KW-1161">Viral attachment to host cell</keyword>
<keyword id="KW-0261">Viral envelope protein</keyword>
<keyword id="KW-0946">Virion</keyword>
<keyword id="KW-1160">Virus entry into host cell</keyword>
<accession>Q04995</accession>
<protein>
    <recommendedName>
        <fullName>Envelope glycoprotein gp150</fullName>
    </recommendedName>
    <alternativeName>
        <fullName>Env polyprotein</fullName>
    </alternativeName>
    <component>
        <recommendedName>
            <fullName>Surface protein</fullName>
            <shortName>SU</shortName>
        </recommendedName>
        <alternativeName>
            <fullName>Glycoprotein 100</fullName>
            <shortName>gp100</shortName>
        </alternativeName>
    </component>
    <component>
        <recommendedName>
            <fullName>Transmembrane protein</fullName>
            <shortName>TM</shortName>
        </recommendedName>
        <alternativeName>
            <fullName>Glycoprotein 36</fullName>
            <shortName>gp36</shortName>
        </alternativeName>
    </component>
</protein>
<evidence type="ECO:0000250" key="1"/>
<evidence type="ECO:0000255" key="2"/>
<evidence type="ECO:0000305" key="3"/>
<dbReference type="EMBL" id="X69496">
    <property type="protein sequence ID" value="CAA49250.1"/>
    <property type="status" value="ALT_INIT"/>
    <property type="molecule type" value="Genomic_DNA"/>
</dbReference>
<dbReference type="PIR" id="JQ2004">
    <property type="entry name" value="JQ2004"/>
</dbReference>
<dbReference type="PIR" id="S29955">
    <property type="entry name" value="S29955"/>
</dbReference>
<dbReference type="GlyCosmos" id="Q04995">
    <property type="glycosylation" value="20 sites, No reported glycans"/>
</dbReference>
<dbReference type="GO" id="GO:0020002">
    <property type="term" value="C:host cell plasma membrane"/>
    <property type="evidence" value="ECO:0007669"/>
    <property type="project" value="UniProtKB-SubCell"/>
</dbReference>
<dbReference type="GO" id="GO:0016020">
    <property type="term" value="C:membrane"/>
    <property type="evidence" value="ECO:0007669"/>
    <property type="project" value="UniProtKB-KW"/>
</dbReference>
<dbReference type="GO" id="GO:0019031">
    <property type="term" value="C:viral envelope"/>
    <property type="evidence" value="ECO:0007669"/>
    <property type="project" value="UniProtKB-KW"/>
</dbReference>
<dbReference type="GO" id="GO:0055036">
    <property type="term" value="C:virion membrane"/>
    <property type="evidence" value="ECO:0007669"/>
    <property type="project" value="UniProtKB-SubCell"/>
</dbReference>
<dbReference type="GO" id="GO:0005198">
    <property type="term" value="F:structural molecule activity"/>
    <property type="evidence" value="ECO:0007669"/>
    <property type="project" value="InterPro"/>
</dbReference>
<dbReference type="GO" id="GO:0046718">
    <property type="term" value="P:symbiont entry into host cell"/>
    <property type="evidence" value="ECO:0007669"/>
    <property type="project" value="UniProtKB-KW"/>
</dbReference>
<dbReference type="GO" id="GO:0019062">
    <property type="term" value="P:virion attachment to host cell"/>
    <property type="evidence" value="ECO:0007669"/>
    <property type="project" value="UniProtKB-KW"/>
</dbReference>
<dbReference type="CDD" id="cd09909">
    <property type="entry name" value="HIV-1-like_HR1-HR2"/>
    <property type="match status" value="1"/>
</dbReference>
<dbReference type="InterPro" id="IPR018582">
    <property type="entry name" value="Envelope_glycop_lentivirus"/>
</dbReference>
<dbReference type="InterPro" id="IPR000328">
    <property type="entry name" value="GP41-like"/>
</dbReference>
<dbReference type="Pfam" id="PF09590">
    <property type="entry name" value="Env-gp36"/>
    <property type="match status" value="1"/>
</dbReference>
<organismHost>
    <name type="scientific">Felidae</name>
    <name type="common">cat family</name>
    <dbReference type="NCBI Taxonomy" id="9681"/>
</organismHost>
<gene>
    <name type="primary">env</name>
</gene>
<reference key="1">
    <citation type="journal article" date="1993" name="J. Gen. Virol.">
        <title>Evolution of structural proteins of feline immunodeficiency virus: molecular epidemiology and evidence of selection for change.</title>
        <authorList>
            <person name="Rigby M.A."/>
            <person name="Holmes E.C."/>
            <person name="Pistello M."/>
            <person name="Mackay A."/>
            <person name="Brown A.J.L."/>
            <person name="Neil J.C."/>
        </authorList>
    </citation>
    <scope>NUCLEOTIDE SEQUENCE [GENOMIC DNA]</scope>
</reference>
<name>ENV_FIVU8</name>
<feature type="chain" id="PRO_0000239537" description="Envelope glycoprotein gp150">
    <location>
        <begin position="1"/>
        <end position="855"/>
    </location>
</feature>
<feature type="chain" id="PRO_0000038727" description="Surface protein" evidence="1">
    <location>
        <begin position="1"/>
        <end position="610"/>
    </location>
</feature>
<feature type="chain" id="PRO_0000038728" description="Transmembrane protein" evidence="1">
    <location>
        <begin position="611"/>
        <end position="855"/>
    </location>
</feature>
<feature type="topological domain" description="Extracellular" evidence="2">
    <location>
        <begin position="1"/>
        <end position="784"/>
    </location>
</feature>
<feature type="transmembrane region" description="Helical" evidence="2">
    <location>
        <begin position="785"/>
        <end position="805"/>
    </location>
</feature>
<feature type="topological domain" description="Cytoplasmic" evidence="2">
    <location>
        <begin position="806"/>
        <end position="855"/>
    </location>
</feature>
<feature type="region of interest" description="Fusion peptide" evidence="2">
    <location>
        <begin position="615"/>
        <end position="635"/>
    </location>
</feature>
<feature type="region of interest" description="Immunosuppression" evidence="1">
    <location>
        <begin position="661"/>
        <end position="679"/>
    </location>
</feature>
<feature type="coiled-coil region" evidence="2">
    <location>
        <begin position="642"/>
        <end position="692"/>
    </location>
</feature>
<feature type="coiled-coil region" evidence="2">
    <location>
        <begin position="735"/>
        <end position="771"/>
    </location>
</feature>
<feature type="site" description="Cleavage; by host" evidence="1">
    <location>
        <begin position="610"/>
        <end position="611"/>
    </location>
</feature>
<feature type="glycosylation site" description="N-linked (GlcNAc...) asparagine; by host" evidence="2">
    <location>
        <position position="220"/>
    </location>
</feature>
<feature type="glycosylation site" description="N-linked (GlcNAc...) asparagine; by host" evidence="2">
    <location>
        <position position="258"/>
    </location>
</feature>
<feature type="glycosylation site" description="N-linked (GlcNAc...) asparagine; by host" evidence="2">
    <location>
        <position position="269"/>
    </location>
</feature>
<feature type="glycosylation site" description="N-linked (GlcNAc...) asparagine; by host" evidence="2">
    <location>
        <position position="274"/>
    </location>
</feature>
<feature type="glycosylation site" description="N-linked (GlcNAc...) asparagine; by host" evidence="2">
    <location>
        <position position="298"/>
    </location>
</feature>
<feature type="glycosylation site" description="N-linked (GlcNAc...) asparagine; by host" evidence="2">
    <location>
        <position position="336"/>
    </location>
</feature>
<feature type="glycosylation site" description="N-linked (GlcNAc...) asparagine; by host" evidence="2">
    <location>
        <position position="418"/>
    </location>
</feature>
<feature type="glycosylation site" description="N-linked (GlcNAc...) asparagine; by host" evidence="2">
    <location>
        <position position="422"/>
    </location>
</feature>
<feature type="glycosylation site" description="N-linked (GlcNAc...) asparagine; by host" evidence="2">
    <location>
        <position position="448"/>
    </location>
</feature>
<feature type="glycosylation site" description="N-linked (GlcNAc...) asparagine; by host" evidence="2">
    <location>
        <position position="469"/>
    </location>
</feature>
<feature type="glycosylation site" description="N-linked (GlcNAc...) asparagine; by host" evidence="2">
    <location>
        <position position="481"/>
    </location>
</feature>
<feature type="glycosylation site" description="N-linked (GlcNAc...) asparagine; by host" evidence="2">
    <location>
        <position position="499"/>
    </location>
</feature>
<feature type="glycosylation site" description="N-linked (GlcNAc...) asparagine; by host" evidence="2">
    <location>
        <position position="518"/>
    </location>
</feature>
<feature type="glycosylation site" description="N-linked (GlcNAc...) asparagine; by host" evidence="2">
    <location>
        <position position="531"/>
    </location>
</feature>
<feature type="glycosylation site" description="N-linked (GlcNAc...) asparagine; by host" evidence="2">
    <location>
        <position position="548"/>
    </location>
</feature>
<feature type="glycosylation site" description="N-linked (GlcNAc...) asparagine; by host" evidence="2">
    <location>
        <position position="551"/>
    </location>
</feature>
<feature type="glycosylation site" description="N-linked (GlcNAc...) asparagine; by host" evidence="2">
    <location>
        <position position="716"/>
    </location>
</feature>
<feature type="glycosylation site" description="N-linked (GlcNAc...) asparagine; by host" evidence="2">
    <location>
        <position position="720"/>
    </location>
</feature>
<feature type="glycosylation site" description="N-linked (GlcNAc...) asparagine; by host" evidence="2">
    <location>
        <position position="728"/>
    </location>
</feature>
<feature type="glycosylation site" description="N-linked (GlcNAc...) asparagine; by host" evidence="2">
    <location>
        <position position="736"/>
    </location>
</feature>
<organism>
    <name type="scientific">Feline immunodeficiency virus (strain UK8)</name>
    <name type="common">FIV</name>
    <dbReference type="NCBI Taxonomy" id="36372"/>
    <lineage>
        <taxon>Viruses</taxon>
        <taxon>Riboviria</taxon>
        <taxon>Pararnavirae</taxon>
        <taxon>Artverviricota</taxon>
        <taxon>Revtraviricetes</taxon>
        <taxon>Ortervirales</taxon>
        <taxon>Retroviridae</taxon>
        <taxon>Orthoretrovirinae</taxon>
        <taxon>Lentivirus</taxon>
        <taxon>Feline immunodeficiency virus</taxon>
    </lineage>
</organism>
<comment type="function">
    <text evidence="1">The surface protein (SU) attaches the virus to the host cell by binding to its receptor. This interaction triggers the refolding of the transmembrane protein (TM) and is thought to activate its fusogenic potential by unmasking its fusion peptide. Fusion occurs at the host cell plasma membrane (By similarity).</text>
</comment>
<comment type="function">
    <text evidence="1">The transmembrane protein (TM) acts as a class I viral fusion protein. Under the current model, the protein has at least 3 conformational states: pre-fusion native state, pre-hairpin intermediate state, and post-fusion hairpin state. During viral and target cell membrane fusion, the coiled coil regions (heptad repeats) assume a trimer-of-hairpins structure, positioning the fusion peptide in close proximity to the C-terminal region of the ectodomain. The formation of this structure appears to drive apposition and subsequent fusion of viral and target cell membranes. Membranes fusion leads to delivery of the nucleocapsid into the cytoplasm (By similarity).</text>
</comment>
<comment type="subunit">
    <text evidence="1">The mature envelope protein (Env) consists of a trimer of SU-TM heterodimers attached by noncovalent interactions or by a labile interchain disulfide bond.</text>
</comment>
<comment type="subcellular location">
    <molecule>Transmembrane protein</molecule>
    <subcellularLocation>
        <location evidence="1">Virion membrane</location>
        <topology evidence="1">Single-pass type I membrane protein</topology>
    </subcellularLocation>
    <subcellularLocation>
        <location evidence="1">Host cell membrane</location>
        <topology evidence="1">Single-pass type I membrane protein</topology>
    </subcellularLocation>
    <text evidence="1">It is probably concentrated at the site of budding and incorporated into the virions possibly by contacts between the cytoplasmic tail of Env and the N-terminus of Gag.</text>
</comment>
<comment type="subcellular location">
    <molecule>Surface protein</molecule>
    <subcellularLocation>
        <location evidence="1">Virion membrane</location>
        <topology evidence="1">Peripheral membrane protein</topology>
    </subcellularLocation>
    <subcellularLocation>
        <location evidence="1">Host cell membrane</location>
        <topology evidence="1">Peripheral membrane protein</topology>
    </subcellularLocation>
    <text evidence="1">The surface protein is not anchored to the viral envelope, but associates with the extravirion surface through its binding to TM. It is probably concentrated at the site of budding and incorporated into the virions possibly by contacts between the cytoplasmic tail of Env and the N-terminus of Gag (By similarity).</text>
</comment>
<comment type="PTM">
    <text evidence="1">Specific enzymatic cleavages in vivo yield mature proteins. Envelope glycoproteins are synthesized as an inactive precursor that is N-glycosylated and processed likely by host cell furin or by a furin-like protease in the Golgi to yield the mature SU and TM proteins. The cleavage site between SU and TM requires the minimal sequence [KR]-X-[KR]-R (By similarity).</text>
</comment>
<comment type="sequence caution" evidence="3">
    <conflict type="erroneous initiation">
        <sequence resource="EMBL-CDS" id="CAA49250"/>
    </conflict>
</comment>
<proteinExistence type="inferred from homology"/>